<keyword id="KW-0378">Hydrolase</keyword>
<keyword id="KW-0479">Metal-binding</keyword>
<keyword id="KW-0482">Metalloprotease</keyword>
<keyword id="KW-0645">Protease</keyword>
<keyword id="KW-1185">Reference proteome</keyword>
<keyword id="KW-0862">Zinc</keyword>
<gene>
    <name type="ordered locus">Asuc_0013</name>
</gene>
<accession>A6VK98</accession>
<proteinExistence type="inferred from homology"/>
<feature type="chain" id="PRO_0000322661" description="UPF0758 protein Asuc_0013">
    <location>
        <begin position="1"/>
        <end position="220"/>
    </location>
</feature>
<feature type="domain" description="MPN" evidence="1">
    <location>
        <begin position="98"/>
        <end position="220"/>
    </location>
</feature>
<feature type="short sequence motif" description="JAMM motif" evidence="1">
    <location>
        <begin position="169"/>
        <end position="182"/>
    </location>
</feature>
<feature type="binding site" evidence="1">
    <location>
        <position position="169"/>
    </location>
    <ligand>
        <name>Zn(2+)</name>
        <dbReference type="ChEBI" id="CHEBI:29105"/>
        <note>catalytic</note>
    </ligand>
</feature>
<feature type="binding site" evidence="1">
    <location>
        <position position="171"/>
    </location>
    <ligand>
        <name>Zn(2+)</name>
        <dbReference type="ChEBI" id="CHEBI:29105"/>
        <note>catalytic</note>
    </ligand>
</feature>
<feature type="binding site" evidence="1">
    <location>
        <position position="182"/>
    </location>
    <ligand>
        <name>Zn(2+)</name>
        <dbReference type="ChEBI" id="CHEBI:29105"/>
        <note>catalytic</note>
    </ligand>
</feature>
<dbReference type="EMBL" id="CP000746">
    <property type="protein sequence ID" value="ABR73395.1"/>
    <property type="molecule type" value="Genomic_DNA"/>
</dbReference>
<dbReference type="RefSeq" id="WP_011978672.1">
    <property type="nucleotide sequence ID" value="NC_009655.1"/>
</dbReference>
<dbReference type="SMR" id="A6VK98"/>
<dbReference type="STRING" id="339671.Asuc_0013"/>
<dbReference type="KEGG" id="asu:Asuc_0013"/>
<dbReference type="eggNOG" id="COG2003">
    <property type="taxonomic scope" value="Bacteria"/>
</dbReference>
<dbReference type="HOGENOM" id="CLU_073529_0_1_6"/>
<dbReference type="OrthoDB" id="9804482at2"/>
<dbReference type="Proteomes" id="UP000001114">
    <property type="component" value="Chromosome"/>
</dbReference>
<dbReference type="GO" id="GO:0046872">
    <property type="term" value="F:metal ion binding"/>
    <property type="evidence" value="ECO:0007669"/>
    <property type="project" value="UniProtKB-KW"/>
</dbReference>
<dbReference type="GO" id="GO:0008237">
    <property type="term" value="F:metallopeptidase activity"/>
    <property type="evidence" value="ECO:0007669"/>
    <property type="project" value="UniProtKB-KW"/>
</dbReference>
<dbReference type="GO" id="GO:0006508">
    <property type="term" value="P:proteolysis"/>
    <property type="evidence" value="ECO:0007669"/>
    <property type="project" value="UniProtKB-KW"/>
</dbReference>
<dbReference type="CDD" id="cd08071">
    <property type="entry name" value="MPN_DUF2466"/>
    <property type="match status" value="1"/>
</dbReference>
<dbReference type="Gene3D" id="3.40.140.10">
    <property type="entry name" value="Cytidine Deaminase, domain 2"/>
    <property type="match status" value="1"/>
</dbReference>
<dbReference type="InterPro" id="IPR037518">
    <property type="entry name" value="MPN"/>
</dbReference>
<dbReference type="InterPro" id="IPR025657">
    <property type="entry name" value="RadC_JAB"/>
</dbReference>
<dbReference type="InterPro" id="IPR010994">
    <property type="entry name" value="RuvA_2-like"/>
</dbReference>
<dbReference type="InterPro" id="IPR001405">
    <property type="entry name" value="UPF0758"/>
</dbReference>
<dbReference type="InterPro" id="IPR020891">
    <property type="entry name" value="UPF0758_CS"/>
</dbReference>
<dbReference type="InterPro" id="IPR046778">
    <property type="entry name" value="UPF0758_N"/>
</dbReference>
<dbReference type="NCBIfam" id="NF000642">
    <property type="entry name" value="PRK00024.1"/>
    <property type="match status" value="1"/>
</dbReference>
<dbReference type="NCBIfam" id="TIGR00608">
    <property type="entry name" value="radc"/>
    <property type="match status" value="1"/>
</dbReference>
<dbReference type="PANTHER" id="PTHR30471">
    <property type="entry name" value="DNA REPAIR PROTEIN RADC"/>
    <property type="match status" value="1"/>
</dbReference>
<dbReference type="PANTHER" id="PTHR30471:SF3">
    <property type="entry name" value="UPF0758 PROTEIN YEES-RELATED"/>
    <property type="match status" value="1"/>
</dbReference>
<dbReference type="Pfam" id="PF04002">
    <property type="entry name" value="RadC"/>
    <property type="match status" value="1"/>
</dbReference>
<dbReference type="Pfam" id="PF20582">
    <property type="entry name" value="UPF0758_N"/>
    <property type="match status" value="1"/>
</dbReference>
<dbReference type="SUPFAM" id="SSF47781">
    <property type="entry name" value="RuvA domain 2-like"/>
    <property type="match status" value="1"/>
</dbReference>
<dbReference type="PROSITE" id="PS50249">
    <property type="entry name" value="MPN"/>
    <property type="match status" value="1"/>
</dbReference>
<dbReference type="PROSITE" id="PS01302">
    <property type="entry name" value="UPF0758"/>
    <property type="match status" value="1"/>
</dbReference>
<name>Y013_ACTSZ</name>
<organism>
    <name type="scientific">Actinobacillus succinogenes (strain ATCC 55618 / DSM 22257 / CCUG 43843 / 130Z)</name>
    <dbReference type="NCBI Taxonomy" id="339671"/>
    <lineage>
        <taxon>Bacteria</taxon>
        <taxon>Pseudomonadati</taxon>
        <taxon>Pseudomonadota</taxon>
        <taxon>Gammaproteobacteria</taxon>
        <taxon>Pasteurellales</taxon>
        <taxon>Pasteurellaceae</taxon>
        <taxon>Actinobacillus</taxon>
    </lineage>
</organism>
<reference key="1">
    <citation type="journal article" date="2010" name="BMC Genomics">
        <title>A genomic perspective on the potential of Actinobacillus succinogenes for industrial succinate production.</title>
        <authorList>
            <person name="McKinlay J.B."/>
            <person name="Laivenieks M."/>
            <person name="Schindler B.D."/>
            <person name="McKinlay A.A."/>
            <person name="Siddaramappa S."/>
            <person name="Challacombe J.F."/>
            <person name="Lowry S.R."/>
            <person name="Clum A."/>
            <person name="Lapidus A.L."/>
            <person name="Burkhart K.B."/>
            <person name="Harkins V."/>
            <person name="Vieille C."/>
        </authorList>
    </citation>
    <scope>NUCLEOTIDE SEQUENCE [LARGE SCALE GENOMIC DNA]</scope>
    <source>
        <strain>ATCC 55618 / DSM 22257 / CCUG 43843 / 130Z</strain>
    </source>
</reference>
<protein>
    <recommendedName>
        <fullName>UPF0758 protein Asuc_0013</fullName>
    </recommendedName>
</protein>
<evidence type="ECO:0000255" key="1">
    <source>
        <dbReference type="PROSITE-ProRule" id="PRU01182"/>
    </source>
</evidence>
<evidence type="ECO:0000305" key="2"/>
<comment type="similarity">
    <text evidence="2">Belongs to the UPF0758 family.</text>
</comment>
<sequence>MENQSLMPREKLLKSGAETLENYELLAIFLRTGIKNCPVIQLSQAVLRYFGSLRGLISADQEQFCQFKGIGITQYIQLQACTEMTKRYLAEELTFAHEFTNPLTVRLYLQTELEHYEREVFSVLFLDNQHRLIKKEDMFRGTINAASVYPREIIKTALYCNAAALILAHNHPSGSAEPSASDKQMTKRIQAAAELMEIRVLDHFVIGKGCYFSFAEQDWL</sequence>